<reference key="1">
    <citation type="journal article" date="1991" name="Plant Mol. Biol.">
        <title>Characterization of cDNA and genomic clones encoding 3-hydroxy-3-methylglutaryl-coenzyme A reductase from Hevea brasiliensis.</title>
        <authorList>
            <person name="Chye M.L."/>
            <person name="Kush A."/>
            <person name="Tan C.T."/>
            <person name="Chua N.H."/>
        </authorList>
    </citation>
    <scope>NUCLEOTIDE SEQUENCE [MRNA]</scope>
    <source>
        <strain>cv. RRIM 600</strain>
        <tissue>Leaf</tissue>
    </source>
</reference>
<organism>
    <name type="scientific">Hevea brasiliensis</name>
    <name type="common">Para rubber tree</name>
    <name type="synonym">Siphonia brasiliensis</name>
    <dbReference type="NCBI Taxonomy" id="3981"/>
    <lineage>
        <taxon>Eukaryota</taxon>
        <taxon>Viridiplantae</taxon>
        <taxon>Streptophyta</taxon>
        <taxon>Embryophyta</taxon>
        <taxon>Tracheophyta</taxon>
        <taxon>Spermatophyta</taxon>
        <taxon>Magnoliopsida</taxon>
        <taxon>eudicotyledons</taxon>
        <taxon>Gunneridae</taxon>
        <taxon>Pentapetalae</taxon>
        <taxon>rosids</taxon>
        <taxon>fabids</taxon>
        <taxon>Malpighiales</taxon>
        <taxon>Euphorbiaceae</taxon>
        <taxon>Crotonoideae</taxon>
        <taxon>Micrandreae</taxon>
        <taxon>Hevea</taxon>
    </lineage>
</organism>
<sequence>LESDFADMDVIGISGNFCSDKKPAAVNWIEGRGKSVVCEAIIKEEVVKKVLKTDVALLVELNMLKNLAGSAVAGALGGFNAHAGNIVSAIFIATGQDPAQNVESSHCITMMEAVNDGKDLHISVTLPSIEVGTVGGGTQLASQSACLNLLGVMGACKESPGSYSRLLATIVAGSVLAGELSLMSAIAAGQLVKSHMKYNRSSKDVSKAAS</sequence>
<evidence type="ECO:0000250" key="1"/>
<evidence type="ECO:0000255" key="2"/>
<evidence type="ECO:0000255" key="3">
    <source>
        <dbReference type="PROSITE-ProRule" id="PRU10003"/>
    </source>
</evidence>
<evidence type="ECO:0000305" key="4"/>
<protein>
    <recommendedName>
        <fullName>3-hydroxy-3-methylglutaryl-coenzyme A reductase 2</fullName>
        <shortName>HMG-CoA reductase 2</shortName>
        <ecNumber>1.1.1.34</ecNumber>
    </recommendedName>
</protein>
<gene>
    <name type="primary">HMGR2</name>
</gene>
<proteinExistence type="evidence at transcript level"/>
<keyword id="KW-0256">Endoplasmic reticulum</keyword>
<keyword id="KW-0325">Glycoprotein</keyword>
<keyword id="KW-0414">Isoprene biosynthesis</keyword>
<keyword id="KW-0472">Membrane</keyword>
<keyword id="KW-0496">Mitochondrion</keyword>
<keyword id="KW-0521">NADP</keyword>
<keyword id="KW-0560">Oxidoreductase</keyword>
<keyword id="KW-0934">Plastid</keyword>
<keyword id="KW-0812">Transmembrane</keyword>
<keyword id="KW-1133">Transmembrane helix</keyword>
<feature type="chain" id="PRO_0000114441" description="3-hydroxy-3-methylglutaryl-coenzyme A reductase 2">
    <location>
        <begin position="1" status="less than"/>
        <end position="210"/>
    </location>
</feature>
<feature type="transmembrane region" description="Helical" evidence="2">
    <location>
        <begin position="166"/>
        <end position="186"/>
    </location>
</feature>
<feature type="active site" description="Charge relay system" evidence="1">
    <location>
        <position position="21"/>
    </location>
</feature>
<feature type="active site" description="Charge relay system" evidence="1">
    <location>
        <position position="97"/>
    </location>
</feature>
<feature type="active site" description="Proton donor" evidence="3">
    <location>
        <position position="195"/>
    </location>
</feature>
<feature type="glycosylation site" description="N-linked (GlcNAc...) asparagine" evidence="2">
    <location>
        <position position="199"/>
    </location>
</feature>
<feature type="non-terminal residue">
    <location>
        <position position="1"/>
    </location>
</feature>
<comment type="function">
    <text>Catalyzes the synthesis of mevalonate. The specific precursor of all isoprenoid compounds present in plants.</text>
</comment>
<comment type="catalytic activity">
    <reaction evidence="3">
        <text>(R)-mevalonate + 2 NADP(+) + CoA = (3S)-3-hydroxy-3-methylglutaryl-CoA + 2 NADPH + 2 H(+)</text>
        <dbReference type="Rhea" id="RHEA:15989"/>
        <dbReference type="ChEBI" id="CHEBI:15378"/>
        <dbReference type="ChEBI" id="CHEBI:36464"/>
        <dbReference type="ChEBI" id="CHEBI:43074"/>
        <dbReference type="ChEBI" id="CHEBI:57287"/>
        <dbReference type="ChEBI" id="CHEBI:57783"/>
        <dbReference type="ChEBI" id="CHEBI:58349"/>
        <dbReference type="EC" id="1.1.1.34"/>
    </reaction>
</comment>
<comment type="pathway">
    <text>Metabolic intermediate biosynthesis; (R)-mevalonate biosynthesis; (R)-mevalonate from acetyl-CoA: step 3/3.</text>
</comment>
<comment type="subcellular location">
    <subcellularLocation>
        <location>Endoplasmic reticulum membrane</location>
        <topology>Multi-pass membrane protein</topology>
    </subcellularLocation>
    <subcellularLocation>
        <location>Mitochondrion membrane</location>
        <topology>Multi-pass membrane protein</topology>
    </subcellularLocation>
    <subcellularLocation>
        <location>Plastid membrane</location>
        <topology>Multi-pass membrane protein</topology>
    </subcellularLocation>
</comment>
<comment type="similarity">
    <text evidence="4">Belongs to the HMG-CoA reductase family.</text>
</comment>
<accession>P29058</accession>
<dbReference type="EC" id="1.1.1.34"/>
<dbReference type="EMBL" id="X54658">
    <property type="protein sequence ID" value="CAA38468.1"/>
    <property type="molecule type" value="mRNA"/>
</dbReference>
<dbReference type="PIR" id="S14953">
    <property type="entry name" value="S14953"/>
</dbReference>
<dbReference type="SMR" id="P29058"/>
<dbReference type="GlyCosmos" id="P29058">
    <property type="glycosylation" value="1 site, No reported glycans"/>
</dbReference>
<dbReference type="UniPathway" id="UPA00058">
    <property type="reaction ID" value="UER00103"/>
</dbReference>
<dbReference type="GO" id="GO:0005789">
    <property type="term" value="C:endoplasmic reticulum membrane"/>
    <property type="evidence" value="ECO:0007669"/>
    <property type="project" value="UniProtKB-SubCell"/>
</dbReference>
<dbReference type="GO" id="GO:0031966">
    <property type="term" value="C:mitochondrial membrane"/>
    <property type="evidence" value="ECO:0007669"/>
    <property type="project" value="UniProtKB-SubCell"/>
</dbReference>
<dbReference type="GO" id="GO:0005778">
    <property type="term" value="C:peroxisomal membrane"/>
    <property type="evidence" value="ECO:0007669"/>
    <property type="project" value="TreeGrafter"/>
</dbReference>
<dbReference type="GO" id="GO:0042170">
    <property type="term" value="C:plastid membrane"/>
    <property type="evidence" value="ECO:0007669"/>
    <property type="project" value="UniProtKB-SubCell"/>
</dbReference>
<dbReference type="GO" id="GO:0004420">
    <property type="term" value="F:hydroxymethylglutaryl-CoA reductase (NADPH) activity"/>
    <property type="evidence" value="ECO:0007669"/>
    <property type="project" value="UniProtKB-EC"/>
</dbReference>
<dbReference type="GO" id="GO:0015936">
    <property type="term" value="P:coenzyme A metabolic process"/>
    <property type="evidence" value="ECO:0007669"/>
    <property type="project" value="InterPro"/>
</dbReference>
<dbReference type="GO" id="GO:0008299">
    <property type="term" value="P:isoprenoid biosynthetic process"/>
    <property type="evidence" value="ECO:0007669"/>
    <property type="project" value="UniProtKB-KW"/>
</dbReference>
<dbReference type="GO" id="GO:0016126">
    <property type="term" value="P:sterol biosynthetic process"/>
    <property type="evidence" value="ECO:0007669"/>
    <property type="project" value="TreeGrafter"/>
</dbReference>
<dbReference type="FunFam" id="3.90.770.10:FF:000001">
    <property type="entry name" value="3-hydroxy-3-methylglutaryl coenzyme A reductase"/>
    <property type="match status" value="1"/>
</dbReference>
<dbReference type="Gene3D" id="3.90.770.10">
    <property type="entry name" value="3-hydroxy-3-methylglutaryl-coenzyme A Reductase, Chain A, domain 2"/>
    <property type="match status" value="1"/>
</dbReference>
<dbReference type="Gene3D" id="3.30.70.420">
    <property type="entry name" value="Hydroxymethylglutaryl-CoA reductase, class I/II, NAD/NADP-binding domain"/>
    <property type="match status" value="1"/>
</dbReference>
<dbReference type="InterPro" id="IPR002202">
    <property type="entry name" value="HMG_CoA_Rdtase"/>
</dbReference>
<dbReference type="InterPro" id="IPR023074">
    <property type="entry name" value="HMG_CoA_Rdtase_cat_sf"/>
</dbReference>
<dbReference type="InterPro" id="IPR023076">
    <property type="entry name" value="HMG_CoA_Rdtase_CS"/>
</dbReference>
<dbReference type="InterPro" id="IPR009023">
    <property type="entry name" value="HMG_CoA_Rdtase_NAD(P)-bd_sf"/>
</dbReference>
<dbReference type="InterPro" id="IPR009029">
    <property type="entry name" value="HMG_CoA_Rdtase_sub-bd_dom_sf"/>
</dbReference>
<dbReference type="PANTHER" id="PTHR10572">
    <property type="entry name" value="3-HYDROXY-3-METHYLGLUTARYL-COENZYME A REDUCTASE"/>
    <property type="match status" value="1"/>
</dbReference>
<dbReference type="PANTHER" id="PTHR10572:SF24">
    <property type="entry name" value="3-HYDROXY-3-METHYLGLUTARYL-COENZYME A REDUCTASE"/>
    <property type="match status" value="1"/>
</dbReference>
<dbReference type="Pfam" id="PF00368">
    <property type="entry name" value="HMG-CoA_red"/>
    <property type="match status" value="1"/>
</dbReference>
<dbReference type="PRINTS" id="PR00071">
    <property type="entry name" value="HMGCOARDTASE"/>
</dbReference>
<dbReference type="SUPFAM" id="SSF55035">
    <property type="entry name" value="NAD-binding domain of HMG-CoA reductase"/>
    <property type="match status" value="1"/>
</dbReference>
<dbReference type="SUPFAM" id="SSF56542">
    <property type="entry name" value="Substrate-binding domain of HMG-CoA reductase"/>
    <property type="match status" value="1"/>
</dbReference>
<dbReference type="PROSITE" id="PS00318">
    <property type="entry name" value="HMG_COA_REDUCTASE_2"/>
    <property type="match status" value="1"/>
</dbReference>
<dbReference type="PROSITE" id="PS01192">
    <property type="entry name" value="HMG_COA_REDUCTASE_3"/>
    <property type="match status" value="1"/>
</dbReference>
<dbReference type="PROSITE" id="PS50065">
    <property type="entry name" value="HMG_COA_REDUCTASE_4"/>
    <property type="match status" value="1"/>
</dbReference>
<name>HMDH2_HEVBR</name>